<reference key="1">
    <citation type="journal article" date="2002" name="Nature">
        <title>The genome sequence of Schizosaccharomyces pombe.</title>
        <authorList>
            <person name="Wood V."/>
            <person name="Gwilliam R."/>
            <person name="Rajandream M.A."/>
            <person name="Lyne M.H."/>
            <person name="Lyne R."/>
            <person name="Stewart A."/>
            <person name="Sgouros J.G."/>
            <person name="Peat N."/>
            <person name="Hayles J."/>
            <person name="Baker S.G."/>
            <person name="Basham D."/>
            <person name="Bowman S."/>
            <person name="Brooks K."/>
            <person name="Brown D."/>
            <person name="Brown S."/>
            <person name="Chillingworth T."/>
            <person name="Churcher C.M."/>
            <person name="Collins M."/>
            <person name="Connor R."/>
            <person name="Cronin A."/>
            <person name="Davis P."/>
            <person name="Feltwell T."/>
            <person name="Fraser A."/>
            <person name="Gentles S."/>
            <person name="Goble A."/>
            <person name="Hamlin N."/>
            <person name="Harris D.E."/>
            <person name="Hidalgo J."/>
            <person name="Hodgson G."/>
            <person name="Holroyd S."/>
            <person name="Hornsby T."/>
            <person name="Howarth S."/>
            <person name="Huckle E.J."/>
            <person name="Hunt S."/>
            <person name="Jagels K."/>
            <person name="James K.D."/>
            <person name="Jones L."/>
            <person name="Jones M."/>
            <person name="Leather S."/>
            <person name="McDonald S."/>
            <person name="McLean J."/>
            <person name="Mooney P."/>
            <person name="Moule S."/>
            <person name="Mungall K.L."/>
            <person name="Murphy L.D."/>
            <person name="Niblett D."/>
            <person name="Odell C."/>
            <person name="Oliver K."/>
            <person name="O'Neil S."/>
            <person name="Pearson D."/>
            <person name="Quail M.A."/>
            <person name="Rabbinowitsch E."/>
            <person name="Rutherford K.M."/>
            <person name="Rutter S."/>
            <person name="Saunders D."/>
            <person name="Seeger K."/>
            <person name="Sharp S."/>
            <person name="Skelton J."/>
            <person name="Simmonds M.N."/>
            <person name="Squares R."/>
            <person name="Squares S."/>
            <person name="Stevens K."/>
            <person name="Taylor K."/>
            <person name="Taylor R.G."/>
            <person name="Tivey A."/>
            <person name="Walsh S.V."/>
            <person name="Warren T."/>
            <person name="Whitehead S."/>
            <person name="Woodward J.R."/>
            <person name="Volckaert G."/>
            <person name="Aert R."/>
            <person name="Robben J."/>
            <person name="Grymonprez B."/>
            <person name="Weltjens I."/>
            <person name="Vanstreels E."/>
            <person name="Rieger M."/>
            <person name="Schaefer M."/>
            <person name="Mueller-Auer S."/>
            <person name="Gabel C."/>
            <person name="Fuchs M."/>
            <person name="Duesterhoeft A."/>
            <person name="Fritzc C."/>
            <person name="Holzer E."/>
            <person name="Moestl D."/>
            <person name="Hilbert H."/>
            <person name="Borzym K."/>
            <person name="Langer I."/>
            <person name="Beck A."/>
            <person name="Lehrach H."/>
            <person name="Reinhardt R."/>
            <person name="Pohl T.M."/>
            <person name="Eger P."/>
            <person name="Zimmermann W."/>
            <person name="Wedler H."/>
            <person name="Wambutt R."/>
            <person name="Purnelle B."/>
            <person name="Goffeau A."/>
            <person name="Cadieu E."/>
            <person name="Dreano S."/>
            <person name="Gloux S."/>
            <person name="Lelaure V."/>
            <person name="Mottier S."/>
            <person name="Galibert F."/>
            <person name="Aves S.J."/>
            <person name="Xiang Z."/>
            <person name="Hunt C."/>
            <person name="Moore K."/>
            <person name="Hurst S.M."/>
            <person name="Lucas M."/>
            <person name="Rochet M."/>
            <person name="Gaillardin C."/>
            <person name="Tallada V.A."/>
            <person name="Garzon A."/>
            <person name="Thode G."/>
            <person name="Daga R.R."/>
            <person name="Cruzado L."/>
            <person name="Jimenez J."/>
            <person name="Sanchez M."/>
            <person name="del Rey F."/>
            <person name="Benito J."/>
            <person name="Dominguez A."/>
            <person name="Revuelta J.L."/>
            <person name="Moreno S."/>
            <person name="Armstrong J."/>
            <person name="Forsburg S.L."/>
            <person name="Cerutti L."/>
            <person name="Lowe T."/>
            <person name="McCombie W.R."/>
            <person name="Paulsen I."/>
            <person name="Potashkin J."/>
            <person name="Shpakovski G.V."/>
            <person name="Ussery D."/>
            <person name="Barrell B.G."/>
            <person name="Nurse P."/>
        </authorList>
    </citation>
    <scope>NUCLEOTIDE SEQUENCE [LARGE SCALE GENOMIC DNA]</scope>
    <source>
        <strain>972 / ATCC 24843</strain>
    </source>
</reference>
<reference key="2">
    <citation type="journal article" date="2006" name="Nat. Biotechnol.">
        <title>ORFeome cloning and global analysis of protein localization in the fission yeast Schizosaccharomyces pombe.</title>
        <authorList>
            <person name="Matsuyama A."/>
            <person name="Arai R."/>
            <person name="Yashiroda Y."/>
            <person name="Shirai A."/>
            <person name="Kamata A."/>
            <person name="Sekido S."/>
            <person name="Kobayashi Y."/>
            <person name="Hashimoto A."/>
            <person name="Hamamoto M."/>
            <person name="Hiraoka Y."/>
            <person name="Horinouchi S."/>
            <person name="Yoshida M."/>
        </authorList>
    </citation>
    <scope>SUBCELLULAR LOCATION [LARGE SCALE ANALYSIS]</scope>
</reference>
<reference key="3">
    <citation type="journal article" date="2008" name="J. Proteome Res.">
        <title>Phosphoproteome analysis of fission yeast.</title>
        <authorList>
            <person name="Wilson-Grady J.T."/>
            <person name="Villen J."/>
            <person name="Gygi S.P."/>
        </authorList>
    </citation>
    <scope>PHOSPHORYLATION [LARGE SCALE ANALYSIS] AT SER-170</scope>
    <scope>IDENTIFICATION BY MASS SPECTROMETRY</scope>
</reference>
<accession>Q9UT17</accession>
<proteinExistence type="evidence at protein level"/>
<evidence type="ECO:0000269" key="1">
    <source>
    </source>
</evidence>
<evidence type="ECO:0000269" key="2">
    <source>
    </source>
</evidence>
<protein>
    <recommendedName>
        <fullName>Uncharacterized protein C9.11</fullName>
    </recommendedName>
</protein>
<dbReference type="EMBL" id="CU329670">
    <property type="protein sequence ID" value="CAB57429.1"/>
    <property type="molecule type" value="Genomic_DNA"/>
</dbReference>
<dbReference type="PIR" id="T39196">
    <property type="entry name" value="T39196"/>
</dbReference>
<dbReference type="RefSeq" id="NP_593354.1">
    <property type="nucleotide sequence ID" value="NM_001018786.2"/>
</dbReference>
<dbReference type="SMR" id="Q9UT17"/>
<dbReference type="BioGRID" id="279994">
    <property type="interactions" value="7"/>
</dbReference>
<dbReference type="iPTMnet" id="Q9UT17"/>
<dbReference type="PaxDb" id="4896-SPAC9.11.1"/>
<dbReference type="EnsemblFungi" id="SPAC9.11.1">
    <property type="protein sequence ID" value="SPAC9.11.1:pep"/>
    <property type="gene ID" value="SPAC9.11"/>
</dbReference>
<dbReference type="KEGG" id="spo:2543579"/>
<dbReference type="PomBase" id="SPAC9.11"/>
<dbReference type="VEuPathDB" id="FungiDB:SPAC9.11"/>
<dbReference type="HOGENOM" id="CLU_847753_0_0_1"/>
<dbReference type="InParanoid" id="Q9UT17"/>
<dbReference type="OMA" id="LMAINAN"/>
<dbReference type="PRO" id="PR:Q9UT17"/>
<dbReference type="Proteomes" id="UP000002485">
    <property type="component" value="Chromosome I"/>
</dbReference>
<dbReference type="GO" id="GO:0005829">
    <property type="term" value="C:cytosol"/>
    <property type="evidence" value="ECO:0007005"/>
    <property type="project" value="PomBase"/>
</dbReference>
<dbReference type="GO" id="GO:0005634">
    <property type="term" value="C:nucleus"/>
    <property type="evidence" value="ECO:0007005"/>
    <property type="project" value="PomBase"/>
</dbReference>
<organism>
    <name type="scientific">Schizosaccharomyces pombe (strain 972 / ATCC 24843)</name>
    <name type="common">Fission yeast</name>
    <dbReference type="NCBI Taxonomy" id="284812"/>
    <lineage>
        <taxon>Eukaryota</taxon>
        <taxon>Fungi</taxon>
        <taxon>Dikarya</taxon>
        <taxon>Ascomycota</taxon>
        <taxon>Taphrinomycotina</taxon>
        <taxon>Schizosaccharomycetes</taxon>
        <taxon>Schizosaccharomycetales</taxon>
        <taxon>Schizosaccharomycetaceae</taxon>
        <taxon>Schizosaccharomyces</taxon>
    </lineage>
</organism>
<keyword id="KW-0963">Cytoplasm</keyword>
<keyword id="KW-0539">Nucleus</keyword>
<keyword id="KW-0597">Phosphoprotein</keyword>
<keyword id="KW-1185">Reference proteome</keyword>
<comment type="subcellular location">
    <subcellularLocation>
        <location evidence="1">Cytoplasm</location>
    </subcellularLocation>
    <subcellularLocation>
        <location evidence="1">Nucleus</location>
    </subcellularLocation>
</comment>
<gene>
    <name type="ORF">SPAC9.11</name>
</gene>
<name>YFYB_SCHPO</name>
<sequence length="328" mass="36907">MDSANKNTKIFAEQLGNDFTISVDDEDMEMEYPLRSSTPTKVIDDQREILLQKASRISKLDEALCELNNESNGSIDLSIDSFIPSYDEFLHKKLLNEDTGHESKVSDQVKQVISTPMSTCFEQWFEGEEQSSTGNNQDISYSSVNSLSPKRRGISLMSIDANKLSPKKTSPNSGYITSPLRHPILLSETEPGTPTKNDSPAYIGLPSQPNSITTLNNTNQKFQVPDNDKPPMSSLNELSASYKPIVFDSSQHKTQGTDNNDSFYHDDTNCIHLSRLEKIRELLTFVQLELKYYVEPLKKELQETKTLLAQKEEEISNLKDKLQNAGLS</sequence>
<feature type="chain" id="PRO_0000304084" description="Uncharacterized protein C9.11">
    <location>
        <begin position="1"/>
        <end position="328"/>
    </location>
</feature>
<feature type="modified residue" description="Phosphoserine" evidence="2">
    <location>
        <position position="170"/>
    </location>
</feature>